<accession>A7F6C1</accession>
<gene>
    <name type="primary">mic60</name>
    <name type="ORF">SS1G_13150</name>
</gene>
<evidence type="ECO:0000250" key="1"/>
<evidence type="ECO:0000255" key="2"/>
<evidence type="ECO:0000256" key="3">
    <source>
        <dbReference type="SAM" id="MobiDB-lite"/>
    </source>
</evidence>
<evidence type="ECO:0000305" key="4"/>
<keyword id="KW-0175">Coiled coil</keyword>
<keyword id="KW-0472">Membrane</keyword>
<keyword id="KW-0496">Mitochondrion</keyword>
<keyword id="KW-0999">Mitochondrion inner membrane</keyword>
<keyword id="KW-1185">Reference proteome</keyword>
<keyword id="KW-0809">Transit peptide</keyword>
<keyword id="KW-0812">Transmembrane</keyword>
<keyword id="KW-1133">Transmembrane helix</keyword>
<name>MIC60_SCLS1</name>
<proteinExistence type="inferred from homology"/>
<organism>
    <name type="scientific">Sclerotinia sclerotiorum (strain ATCC 18683 / 1980 / Ss-1)</name>
    <name type="common">White mold</name>
    <name type="synonym">Whetzelinia sclerotiorum</name>
    <dbReference type="NCBI Taxonomy" id="665079"/>
    <lineage>
        <taxon>Eukaryota</taxon>
        <taxon>Fungi</taxon>
        <taxon>Dikarya</taxon>
        <taxon>Ascomycota</taxon>
        <taxon>Pezizomycotina</taxon>
        <taxon>Leotiomycetes</taxon>
        <taxon>Helotiales</taxon>
        <taxon>Sclerotiniaceae</taxon>
        <taxon>Sclerotinia</taxon>
    </lineage>
</organism>
<reference key="1">
    <citation type="journal article" date="2011" name="PLoS Genet.">
        <title>Genomic analysis of the necrotrophic fungal pathogens Sclerotinia sclerotiorum and Botrytis cinerea.</title>
        <authorList>
            <person name="Amselem J."/>
            <person name="Cuomo C.A."/>
            <person name="van Kan J.A.L."/>
            <person name="Viaud M."/>
            <person name="Benito E.P."/>
            <person name="Couloux A."/>
            <person name="Coutinho P.M."/>
            <person name="de Vries R.P."/>
            <person name="Dyer P.S."/>
            <person name="Fillinger S."/>
            <person name="Fournier E."/>
            <person name="Gout L."/>
            <person name="Hahn M."/>
            <person name="Kohn L."/>
            <person name="Lapalu N."/>
            <person name="Plummer K.M."/>
            <person name="Pradier J.-M."/>
            <person name="Quevillon E."/>
            <person name="Sharon A."/>
            <person name="Simon A."/>
            <person name="ten Have A."/>
            <person name="Tudzynski B."/>
            <person name="Tudzynski P."/>
            <person name="Wincker P."/>
            <person name="Andrew M."/>
            <person name="Anthouard V."/>
            <person name="Beever R.E."/>
            <person name="Beffa R."/>
            <person name="Benoit I."/>
            <person name="Bouzid O."/>
            <person name="Brault B."/>
            <person name="Chen Z."/>
            <person name="Choquer M."/>
            <person name="Collemare J."/>
            <person name="Cotton P."/>
            <person name="Danchin E.G."/>
            <person name="Da Silva C."/>
            <person name="Gautier A."/>
            <person name="Giraud C."/>
            <person name="Giraud T."/>
            <person name="Gonzalez C."/>
            <person name="Grossetete S."/>
            <person name="Gueldener U."/>
            <person name="Henrissat B."/>
            <person name="Howlett B.J."/>
            <person name="Kodira C."/>
            <person name="Kretschmer M."/>
            <person name="Lappartient A."/>
            <person name="Leroch M."/>
            <person name="Levis C."/>
            <person name="Mauceli E."/>
            <person name="Neuveglise C."/>
            <person name="Oeser B."/>
            <person name="Pearson M."/>
            <person name="Poulain J."/>
            <person name="Poussereau N."/>
            <person name="Quesneville H."/>
            <person name="Rascle C."/>
            <person name="Schumacher J."/>
            <person name="Segurens B."/>
            <person name="Sexton A."/>
            <person name="Silva E."/>
            <person name="Sirven C."/>
            <person name="Soanes D.M."/>
            <person name="Talbot N.J."/>
            <person name="Templeton M."/>
            <person name="Yandava C."/>
            <person name="Yarden O."/>
            <person name="Zeng Q."/>
            <person name="Rollins J.A."/>
            <person name="Lebrun M.-H."/>
            <person name="Dickman M."/>
        </authorList>
    </citation>
    <scope>NUCLEOTIDE SEQUENCE [LARGE SCALE GENOMIC DNA]</scope>
    <source>
        <strain>ATCC 18683 / 1980 / Ss-1</strain>
    </source>
</reference>
<sequence>MLRAGLRSSRALGLRPNVVSPGRQWRAQNARVISDTMRTFADKSSISDSRPPVLPGSASEATSEPLPPGAVATPNSAAPTPATPTSSTIPAENVPLTPPPPGVQSPGPPPPSSSPPPPAPKPKRRFFRKFFTTLFLLTTLGFGGGVYYSRINDNFHDFFTEYVPFGEDAVLYFEEQEFRKRFPLISSRASRPPRDTGEQVKIPSQSGVSWRVANENKDSTGRHTSSAKDKVKPSEAVQTPHDSKPADRVKAVEQVKSGNSPVKNSPAPPATPESKPSNVQKDPEVNEPSRAYKKIERIDPINIPNGNEPVVQELVKIMNDIIAVVNADNANARFTSTMDKAKAELNRVGAKILDMKDAALKQADEKIKSSDAEFDRAAMQLMQNFKNQQAEQEAQFRAEYEAERKRIHENYEQKLKSELDRANEVNEKTLQNNLTEQALELKRAFLADVKNRVEQEREGRLGKLSELTSTVNDLEKLTGDFNTVVDQNLKTQHLHVAVEAVRANLEKSQIPRPFTRELAALKEIASDDPVVNAAIASINPVAYQKGVPSSAALIDRFRRVASEVRKASLLPEEAGVASHASSYVLSKLLFKKKGLATGDDVESILTRTETFLEEGDLDGAAREMNGLKGWAKTLSKDWLGEVRKVLEVQQALDKPDYKV</sequence>
<dbReference type="EMBL" id="CH476643">
    <property type="protein sequence ID" value="EDN98292.1"/>
    <property type="molecule type" value="Genomic_DNA"/>
</dbReference>
<dbReference type="RefSeq" id="XP_001586057.1">
    <property type="nucleotide sequence ID" value="XM_001586007.1"/>
</dbReference>
<dbReference type="SMR" id="A7F6C1"/>
<dbReference type="FunCoup" id="A7F6C1">
    <property type="interactions" value="168"/>
</dbReference>
<dbReference type="STRING" id="665079.A7F6C1"/>
<dbReference type="EnsemblFungi" id="EDN98292">
    <property type="protein sequence ID" value="EDN98292"/>
    <property type="gene ID" value="SS1G_13150"/>
</dbReference>
<dbReference type="GeneID" id="5482053"/>
<dbReference type="KEGG" id="ssl:SS1G_13150"/>
<dbReference type="eggNOG" id="KOG1854">
    <property type="taxonomic scope" value="Eukaryota"/>
</dbReference>
<dbReference type="HOGENOM" id="CLU_008024_1_2_1"/>
<dbReference type="InParanoid" id="A7F6C1"/>
<dbReference type="OMA" id="RLDHQMQ"/>
<dbReference type="Proteomes" id="UP000001312">
    <property type="component" value="Unassembled WGS sequence"/>
</dbReference>
<dbReference type="GO" id="GO:0061617">
    <property type="term" value="C:MICOS complex"/>
    <property type="evidence" value="ECO:0000318"/>
    <property type="project" value="GO_Central"/>
</dbReference>
<dbReference type="GO" id="GO:0042407">
    <property type="term" value="P:cristae formation"/>
    <property type="evidence" value="ECO:0000318"/>
    <property type="project" value="GO_Central"/>
</dbReference>
<dbReference type="InterPro" id="IPR019133">
    <property type="entry name" value="MIC60"/>
</dbReference>
<dbReference type="PANTHER" id="PTHR15415:SF7">
    <property type="entry name" value="MICOS COMPLEX SUBUNIT MIC60"/>
    <property type="match status" value="1"/>
</dbReference>
<dbReference type="PANTHER" id="PTHR15415">
    <property type="entry name" value="MITOFILIN"/>
    <property type="match status" value="1"/>
</dbReference>
<dbReference type="Pfam" id="PF09731">
    <property type="entry name" value="Mitofilin"/>
    <property type="match status" value="1"/>
</dbReference>
<protein>
    <recommendedName>
        <fullName>MICOS complex subunit mic60</fullName>
    </recommendedName>
    <alternativeName>
        <fullName>Mitofilin</fullName>
    </alternativeName>
</protein>
<feature type="transit peptide" description="Mitochondrion" evidence="2">
    <location>
        <begin position="1"/>
        <end position="40"/>
    </location>
</feature>
<feature type="chain" id="PRO_0000406673" description="MICOS complex subunit mic60">
    <location>
        <begin position="41"/>
        <end position="659"/>
    </location>
</feature>
<feature type="topological domain" description="Mitochondrial matrix" evidence="2">
    <location>
        <begin position="41"/>
        <end position="129"/>
    </location>
</feature>
<feature type="transmembrane region" description="Helical" evidence="2">
    <location>
        <begin position="130"/>
        <end position="149"/>
    </location>
</feature>
<feature type="topological domain" description="Mitochondrial intermembrane" evidence="2">
    <location>
        <begin position="150"/>
        <end position="659"/>
    </location>
</feature>
<feature type="region of interest" description="Disordered" evidence="3">
    <location>
        <begin position="41"/>
        <end position="123"/>
    </location>
</feature>
<feature type="region of interest" description="Disordered" evidence="3">
    <location>
        <begin position="187"/>
        <end position="290"/>
    </location>
</feature>
<feature type="coiled-coil region" evidence="2">
    <location>
        <begin position="403"/>
        <end position="458"/>
    </location>
</feature>
<feature type="compositionally biased region" description="Low complexity" evidence="3">
    <location>
        <begin position="72"/>
        <end position="91"/>
    </location>
</feature>
<feature type="compositionally biased region" description="Pro residues" evidence="3">
    <location>
        <begin position="96"/>
        <end position="120"/>
    </location>
</feature>
<feature type="compositionally biased region" description="Basic and acidic residues" evidence="3">
    <location>
        <begin position="214"/>
        <end position="233"/>
    </location>
</feature>
<feature type="compositionally biased region" description="Basic and acidic residues" evidence="3">
    <location>
        <begin position="241"/>
        <end position="253"/>
    </location>
</feature>
<comment type="function">
    <text evidence="1">Component of the MICOS complex, a large protein complex of the mitochondrial inner membrane that plays crucial roles in the maintenance of crista junctions, inner membrane architecture, and formation of contact sites to the outer membrane. Plays a role in keeping cristae membranes connected to the inner boundary membrane. Also promotes protein import via the mitochondrial intermembrane space assembly (MIA) pathway (By similarity).</text>
</comment>
<comment type="subunit">
    <text evidence="1">Component of the mitochondrial contact site and cristae organizing system (MICOS) complex.</text>
</comment>
<comment type="subcellular location">
    <subcellularLocation>
        <location evidence="1">Mitochondrion inner membrane</location>
        <topology evidence="1">Single-pass membrane protein</topology>
    </subcellularLocation>
</comment>
<comment type="similarity">
    <text evidence="4">Belongs to the MICOS complex subunit Mic60 family.</text>
</comment>